<feature type="chain" id="PRO_1000081160" description="Ion-translocating oxidoreductase complex subunit D">
    <location>
        <begin position="1"/>
        <end position="346"/>
    </location>
</feature>
<feature type="transmembrane region" description="Helical" evidence="1">
    <location>
        <begin position="20"/>
        <end position="40"/>
    </location>
</feature>
<feature type="transmembrane region" description="Helical" evidence="1">
    <location>
        <begin position="42"/>
        <end position="62"/>
    </location>
</feature>
<feature type="transmembrane region" description="Helical" evidence="1">
    <location>
        <begin position="69"/>
        <end position="91"/>
    </location>
</feature>
<feature type="transmembrane region" description="Helical" evidence="1">
    <location>
        <begin position="120"/>
        <end position="140"/>
    </location>
</feature>
<feature type="transmembrane region" description="Helical" evidence="1">
    <location>
        <begin position="212"/>
        <end position="232"/>
    </location>
</feature>
<feature type="transmembrane region" description="Helical" evidence="1">
    <location>
        <begin position="242"/>
        <end position="262"/>
    </location>
</feature>
<feature type="transmembrane region" description="Helical" evidence="1">
    <location>
        <begin position="264"/>
        <end position="284"/>
    </location>
</feature>
<feature type="transmembrane region" description="Helical" evidence="1">
    <location>
        <begin position="290"/>
        <end position="310"/>
    </location>
</feature>
<feature type="transmembrane region" description="Helical" evidence="1">
    <location>
        <begin position="314"/>
        <end position="334"/>
    </location>
</feature>
<feature type="modified residue" description="FMN phosphoryl threonine" evidence="1">
    <location>
        <position position="187"/>
    </location>
</feature>
<name>RNFD_SODGM</name>
<accession>Q2NSZ8</accession>
<reference key="1">
    <citation type="journal article" date="2006" name="Genome Res.">
        <title>Massive genome erosion and functional adaptations provide insights into the symbiotic lifestyle of Sodalis glossinidius in the tsetse host.</title>
        <authorList>
            <person name="Toh H."/>
            <person name="Weiss B.L."/>
            <person name="Perkin S.A.H."/>
            <person name="Yamashita A."/>
            <person name="Oshima K."/>
            <person name="Hattori M."/>
            <person name="Aksoy S."/>
        </authorList>
    </citation>
    <scope>NUCLEOTIDE SEQUENCE [LARGE SCALE GENOMIC DNA]</scope>
    <source>
        <strain>morsitans</strain>
    </source>
</reference>
<gene>
    <name evidence="1" type="primary">rnfD</name>
    <name type="ordered locus">SG1452</name>
</gene>
<comment type="function">
    <text evidence="1">Part of a membrane-bound complex that couples electron transfer with translocation of ions across the membrane.</text>
</comment>
<comment type="cofactor">
    <cofactor evidence="1">
        <name>FMN</name>
        <dbReference type="ChEBI" id="CHEBI:58210"/>
    </cofactor>
</comment>
<comment type="subunit">
    <text evidence="1">The complex is composed of six subunits: RnfA, RnfB, RnfC, RnfD, RnfE and RnfG.</text>
</comment>
<comment type="subcellular location">
    <subcellularLocation>
        <location evidence="1">Cell inner membrane</location>
        <topology evidence="1">Multi-pass membrane protein</topology>
    </subcellularLocation>
</comment>
<comment type="similarity">
    <text evidence="1">Belongs to the NqrB/RnfD family.</text>
</comment>
<proteinExistence type="inferred from homology"/>
<evidence type="ECO:0000255" key="1">
    <source>
        <dbReference type="HAMAP-Rule" id="MF_00462"/>
    </source>
</evidence>
<keyword id="KW-0997">Cell inner membrane</keyword>
<keyword id="KW-1003">Cell membrane</keyword>
<keyword id="KW-0249">Electron transport</keyword>
<keyword id="KW-0285">Flavoprotein</keyword>
<keyword id="KW-0288">FMN</keyword>
<keyword id="KW-0472">Membrane</keyword>
<keyword id="KW-0597">Phosphoprotein</keyword>
<keyword id="KW-1278">Translocase</keyword>
<keyword id="KW-0812">Transmembrane</keyword>
<keyword id="KW-1133">Transmembrane helix</keyword>
<keyword id="KW-0813">Transport</keyword>
<protein>
    <recommendedName>
        <fullName evidence="1">Ion-translocating oxidoreductase complex subunit D</fullName>
        <ecNumber evidence="1">7.-.-.-</ecNumber>
    </recommendedName>
    <alternativeName>
        <fullName evidence="1">Rnf electron transport complex subunit D</fullName>
    </alternativeName>
</protein>
<sequence length="346" mass="37254">MAFRIASSPFTHNRQTTRQIMIQVMLACLPGLMALTTFFGSGIIIQLVIACVTALVAEGVVLTLRRQPLASRLGDGSALLTALLLALSLPPLGPWWMMVLATAFAIVIAKQLYGGLGHNPFNPAMVGYVVLLISFPVQMTSWSPQQSLLLHPVSLTDSMALIFTGVTPDGLTLTQLRATVDGITQATPLDGFKTGLRTGAMTAFHHRWDWQASAGWTWANIGFLLGGLYLIWRRVISWHIPLSLLAAMLIGAGLGHWLAPVVSAPPLLHLFSGATMLGAFFIATDPVTAAATVRGRVIFGALTGLLVWLIRTWGGYPDGVAFAVLLANICVPLIDHYTQPRAYGHR</sequence>
<organism>
    <name type="scientific">Sodalis glossinidius (strain morsitans)</name>
    <dbReference type="NCBI Taxonomy" id="343509"/>
    <lineage>
        <taxon>Bacteria</taxon>
        <taxon>Pseudomonadati</taxon>
        <taxon>Pseudomonadota</taxon>
        <taxon>Gammaproteobacteria</taxon>
        <taxon>Enterobacterales</taxon>
        <taxon>Bruguierivoracaceae</taxon>
        <taxon>Sodalis</taxon>
    </lineage>
</organism>
<dbReference type="EC" id="7.-.-.-" evidence="1"/>
<dbReference type="EMBL" id="AP008232">
    <property type="protein sequence ID" value="BAE74727.1"/>
    <property type="molecule type" value="Genomic_DNA"/>
</dbReference>
<dbReference type="RefSeq" id="WP_011411272.1">
    <property type="nucleotide sequence ID" value="NC_007712.1"/>
</dbReference>
<dbReference type="SMR" id="Q2NSZ8"/>
<dbReference type="STRING" id="343509.SG1452"/>
<dbReference type="KEGG" id="sgl:SG1452"/>
<dbReference type="eggNOG" id="COG4658">
    <property type="taxonomic scope" value="Bacteria"/>
</dbReference>
<dbReference type="HOGENOM" id="CLU_042020_0_0_6"/>
<dbReference type="OrthoDB" id="9776359at2"/>
<dbReference type="BioCyc" id="SGLO343509:SGP1_RS12860-MONOMER"/>
<dbReference type="Proteomes" id="UP000001932">
    <property type="component" value="Chromosome"/>
</dbReference>
<dbReference type="GO" id="GO:0005886">
    <property type="term" value="C:plasma membrane"/>
    <property type="evidence" value="ECO:0007669"/>
    <property type="project" value="UniProtKB-SubCell"/>
</dbReference>
<dbReference type="GO" id="GO:0022900">
    <property type="term" value="P:electron transport chain"/>
    <property type="evidence" value="ECO:0007669"/>
    <property type="project" value="UniProtKB-UniRule"/>
</dbReference>
<dbReference type="GO" id="GO:0055085">
    <property type="term" value="P:transmembrane transport"/>
    <property type="evidence" value="ECO:0007669"/>
    <property type="project" value="InterPro"/>
</dbReference>
<dbReference type="HAMAP" id="MF_00462">
    <property type="entry name" value="RsxD_RnfD"/>
    <property type="match status" value="1"/>
</dbReference>
<dbReference type="InterPro" id="IPR004338">
    <property type="entry name" value="NqrB/RnfD"/>
</dbReference>
<dbReference type="InterPro" id="IPR011303">
    <property type="entry name" value="RnfD_bac"/>
</dbReference>
<dbReference type="NCBIfam" id="NF002011">
    <property type="entry name" value="PRK00816.1"/>
    <property type="match status" value="1"/>
</dbReference>
<dbReference type="NCBIfam" id="TIGR01946">
    <property type="entry name" value="rnfD"/>
    <property type="match status" value="1"/>
</dbReference>
<dbReference type="PANTHER" id="PTHR30578">
    <property type="entry name" value="ELECTRON TRANSPORT COMPLEX PROTEIN RNFD"/>
    <property type="match status" value="1"/>
</dbReference>
<dbReference type="PANTHER" id="PTHR30578:SF0">
    <property type="entry name" value="ION-TRANSLOCATING OXIDOREDUCTASE COMPLEX SUBUNIT D"/>
    <property type="match status" value="1"/>
</dbReference>
<dbReference type="Pfam" id="PF03116">
    <property type="entry name" value="NQR2_RnfD_RnfE"/>
    <property type="match status" value="1"/>
</dbReference>